<feature type="signal peptide" evidence="1">
    <location>
        <begin position="1"/>
        <end position="47"/>
    </location>
</feature>
<feature type="chain" id="PRO_0000034770" description="Ferric-pyoverdine 358 receptor">
    <location>
        <begin position="48"/>
        <end position="819"/>
    </location>
</feature>
<feature type="domain" description="TBDR plug" evidence="2">
    <location>
        <begin position="166"/>
        <end position="276"/>
    </location>
</feature>
<feature type="domain" description="TBDR beta-barrel" evidence="2">
    <location>
        <begin position="281"/>
        <end position="819"/>
    </location>
</feature>
<feature type="short sequence motif" description="TonB box">
    <location>
        <begin position="115"/>
        <end position="122"/>
    </location>
</feature>
<feature type="short sequence motif" description="TonB C-terminal box">
    <location>
        <begin position="802"/>
        <end position="819"/>
    </location>
</feature>
<feature type="strand" evidence="5">
    <location>
        <begin position="56"/>
        <end position="58"/>
    </location>
</feature>
<feature type="helix" evidence="5">
    <location>
        <begin position="59"/>
        <end position="70"/>
    </location>
</feature>
<feature type="strand" evidence="5">
    <location>
        <begin position="73"/>
        <end position="75"/>
    </location>
</feature>
<feature type="turn" evidence="5">
    <location>
        <begin position="78"/>
        <end position="83"/>
    </location>
</feature>
<feature type="strand" evidence="5">
    <location>
        <begin position="91"/>
        <end position="93"/>
    </location>
</feature>
<feature type="helix" evidence="5">
    <location>
        <begin position="95"/>
        <end position="103"/>
    </location>
</feature>
<feature type="strand" evidence="5">
    <location>
        <begin position="109"/>
        <end position="113"/>
    </location>
</feature>
<feature type="strand" evidence="5">
    <location>
        <begin position="116"/>
        <end position="120"/>
    </location>
</feature>
<comment type="function">
    <text>Specific receptor for the siderophore ferric pyoverdine (pseudobactin) 358.</text>
</comment>
<comment type="subcellular location">
    <subcellularLocation>
        <location evidence="2">Cell outer membrane</location>
        <topology evidence="2">Multi-pass membrane protein</topology>
    </subcellularLocation>
</comment>
<comment type="similarity">
    <text evidence="4">Belongs to the TonB-dependent receptor family.</text>
</comment>
<sequence>MSKPLPSALNPLAKALLIRHSLRPRHALSRIGMGLALSSALVFQVQAQEWTLDIPAQSMNSALQALAKQTDTQLLYSPEDIGGLRSSALKGRHDLQSSLRILLQGTGLRYQIDGNTVTVTASAAAKDGQIELSATNVNSAGLGETTEGTGSYTTRVTSTATKMNLSIRETPQTITVVTRQRMDDQHLGSMNEVLTQTPGITMSQDGGERFNIYSRGSAINIYQFDGVTTYQDNQTRNMPSTLMDVGLYDRIEIVRGATGLMTGAGDPSAVVNVIRKRPTREFKSHIQAGVGSWDYYRAEADVSGPLTDDGRVRGRFFAAKQDNHTFMDWYTQDRDVLYGVVEADVTDTTVARFGIDRQTYKVNGAPGVPIIYTNGQPTNFSRSTSSDARWGYDDYTTTNYTFGLEQQLAHDWQFKLAAAYMDVDRDSFSSYYSTTTNRSYLELDGSTEISAGIVTAKQHQKGVDATLQGPFQLLGQTHELIVGYNYLEYENKHRGDSGPDVNINFYDWDNQTPKPGDDEIIPGIQYNISNRQSGYFVASRFNLTDDLHLILGARASNYRFDYALWRIGNEPAPYKMVERGVVTPYAGIVYDLTNEQSVYASYTDIFKPQNNVDITGKPLDPEVGKNYELGWKGEFLEGRLNANIALYMVKRDNLAESTNEVVPDSGGLIASRAVDGAETKGVDVELSGEVLPGWNVFTGYSHTRTEDADGKRLTPQLPMDTFRFWNTYRLPGEWEKLTLGGGVNWNSKSTLNFARYNSHVTQDDYFVTSLMARYRINESLAATLNVNNIFDKKYYAGMAGSYGHYGAPRNATVTLRYDF</sequence>
<keyword id="KW-0002">3D-structure</keyword>
<keyword id="KW-0998">Cell outer membrane</keyword>
<keyword id="KW-0406">Ion transport</keyword>
<keyword id="KW-0408">Iron</keyword>
<keyword id="KW-0410">Iron transport</keyword>
<keyword id="KW-0472">Membrane</keyword>
<keyword id="KW-0675">Receptor</keyword>
<keyword id="KW-0732">Signal</keyword>
<keyword id="KW-0798">TonB box</keyword>
<keyword id="KW-0812">Transmembrane</keyword>
<keyword id="KW-1134">Transmembrane beta strand</keyword>
<keyword id="KW-0813">Transport</keyword>
<protein>
    <recommendedName>
        <fullName evidence="4">Ferric-pyoverdine 358 receptor</fullName>
    </recommendedName>
    <alternativeName>
        <fullName evidence="3">Ferric-pseudobactin 358 receptor</fullName>
    </alternativeName>
</protein>
<name>PUPA_PSEPU</name>
<organism>
    <name type="scientific">Pseudomonas putida</name>
    <name type="common">Arthrobacter siderocapsulatus</name>
    <dbReference type="NCBI Taxonomy" id="303"/>
    <lineage>
        <taxon>Bacteria</taxon>
        <taxon>Pseudomonadati</taxon>
        <taxon>Pseudomonadota</taxon>
        <taxon>Gammaproteobacteria</taxon>
        <taxon>Pseudomonadales</taxon>
        <taxon>Pseudomonadaceae</taxon>
        <taxon>Pseudomonas</taxon>
    </lineage>
</organism>
<gene>
    <name type="primary">pupA</name>
</gene>
<evidence type="ECO:0000255" key="1"/>
<evidence type="ECO:0000255" key="2">
    <source>
        <dbReference type="PROSITE-ProRule" id="PRU01360"/>
    </source>
</evidence>
<evidence type="ECO:0000303" key="3">
    <source>
    </source>
</evidence>
<evidence type="ECO:0000305" key="4"/>
<evidence type="ECO:0007829" key="5">
    <source>
        <dbReference type="PDB" id="2A02"/>
    </source>
</evidence>
<reference key="1">
    <citation type="journal article" date="1991" name="Mol. Microbiol.">
        <title>The ferric-pseudobactin receptor PupA of Pseudomonas putida WCS358: homology to TonB-dependent Escherichia coli receptors and specificity of the protein.</title>
        <authorList>
            <person name="Bitter W."/>
            <person name="Marugg J.D."/>
            <person name="de Weger L.A."/>
            <person name="Tommassen J."/>
            <person name="Weisbeek P.J."/>
        </authorList>
    </citation>
    <scope>NUCLEOTIDE SEQUENCE [GENOMIC DNA]</scope>
    <source>
        <strain>WCS358</strain>
    </source>
</reference>
<proteinExistence type="evidence at protein level"/>
<accession>P25184</accession>
<dbReference type="EMBL" id="X56605">
    <property type="protein sequence ID" value="CAA39942.1"/>
    <property type="molecule type" value="Genomic_DNA"/>
</dbReference>
<dbReference type="PIR" id="S15169">
    <property type="entry name" value="S15169"/>
</dbReference>
<dbReference type="PDB" id="2A02">
    <property type="method" value="NMR"/>
    <property type="chains" value="A=48-128"/>
</dbReference>
<dbReference type="PDBsum" id="2A02"/>
<dbReference type="SMR" id="P25184"/>
<dbReference type="TCDB" id="1.B.14.1.14">
    <property type="family name" value="the outer membrane receptor (omr) family"/>
</dbReference>
<dbReference type="EvolutionaryTrace" id="P25184"/>
<dbReference type="GO" id="GO:0009279">
    <property type="term" value="C:cell outer membrane"/>
    <property type="evidence" value="ECO:0007669"/>
    <property type="project" value="UniProtKB-SubCell"/>
</dbReference>
<dbReference type="GO" id="GO:0015344">
    <property type="term" value="F:siderophore uptake transmembrane transporter activity"/>
    <property type="evidence" value="ECO:0007669"/>
    <property type="project" value="TreeGrafter"/>
</dbReference>
<dbReference type="GO" id="GO:0038023">
    <property type="term" value="F:signaling receptor activity"/>
    <property type="evidence" value="ECO:0007669"/>
    <property type="project" value="InterPro"/>
</dbReference>
<dbReference type="CDD" id="cd01347">
    <property type="entry name" value="ligand_gated_channel"/>
    <property type="match status" value="1"/>
</dbReference>
<dbReference type="FunFam" id="2.170.130.10:FF:000010">
    <property type="entry name" value="Ferripyoverdine receptor"/>
    <property type="match status" value="1"/>
</dbReference>
<dbReference type="Gene3D" id="3.55.50.30">
    <property type="match status" value="1"/>
</dbReference>
<dbReference type="Gene3D" id="2.40.170.20">
    <property type="entry name" value="TonB-dependent receptor, beta-barrel domain"/>
    <property type="match status" value="1"/>
</dbReference>
<dbReference type="Gene3D" id="2.170.130.10">
    <property type="entry name" value="TonB-dependent receptor, plug domain"/>
    <property type="match status" value="1"/>
</dbReference>
<dbReference type="InterPro" id="IPR012910">
    <property type="entry name" value="Plug_dom"/>
</dbReference>
<dbReference type="InterPro" id="IPR037066">
    <property type="entry name" value="Plug_dom_sf"/>
</dbReference>
<dbReference type="InterPro" id="IPR011662">
    <property type="entry name" value="Secretin/TonB_short_N"/>
</dbReference>
<dbReference type="InterPro" id="IPR039426">
    <property type="entry name" value="TonB-dep_rcpt-like"/>
</dbReference>
<dbReference type="InterPro" id="IPR000531">
    <property type="entry name" value="TonB-dep_rcpt_b-brl"/>
</dbReference>
<dbReference type="InterPro" id="IPR010916">
    <property type="entry name" value="TonB_box_CS"/>
</dbReference>
<dbReference type="InterPro" id="IPR036942">
    <property type="entry name" value="TonB_rcpt_b-brl_sf"/>
</dbReference>
<dbReference type="InterPro" id="IPR010917">
    <property type="entry name" value="TonB_rcpt_CS"/>
</dbReference>
<dbReference type="InterPro" id="IPR010105">
    <property type="entry name" value="TonB_sidphr_rcpt"/>
</dbReference>
<dbReference type="NCBIfam" id="TIGR01783">
    <property type="entry name" value="TonB-siderophor"/>
    <property type="match status" value="1"/>
</dbReference>
<dbReference type="PANTHER" id="PTHR32552">
    <property type="entry name" value="FERRICHROME IRON RECEPTOR-RELATED"/>
    <property type="match status" value="1"/>
</dbReference>
<dbReference type="PANTHER" id="PTHR32552:SF74">
    <property type="entry name" value="HYDROXAMATE SIDEROPHORE RECEPTOR FHUE"/>
    <property type="match status" value="1"/>
</dbReference>
<dbReference type="Pfam" id="PF07715">
    <property type="entry name" value="Plug"/>
    <property type="match status" value="1"/>
</dbReference>
<dbReference type="Pfam" id="PF07660">
    <property type="entry name" value="STN"/>
    <property type="match status" value="1"/>
</dbReference>
<dbReference type="Pfam" id="PF00593">
    <property type="entry name" value="TonB_dep_Rec_b-barrel"/>
    <property type="match status" value="1"/>
</dbReference>
<dbReference type="SMART" id="SM00965">
    <property type="entry name" value="STN"/>
    <property type="match status" value="1"/>
</dbReference>
<dbReference type="SUPFAM" id="SSF56935">
    <property type="entry name" value="Porins"/>
    <property type="match status" value="1"/>
</dbReference>
<dbReference type="PROSITE" id="PS00430">
    <property type="entry name" value="TONB_DEPENDENT_REC_1"/>
    <property type="match status" value="1"/>
</dbReference>
<dbReference type="PROSITE" id="PS01156">
    <property type="entry name" value="TONB_DEPENDENT_REC_2"/>
    <property type="match status" value="1"/>
</dbReference>
<dbReference type="PROSITE" id="PS52016">
    <property type="entry name" value="TONB_DEPENDENT_REC_3"/>
    <property type="match status" value="1"/>
</dbReference>